<sequence length="429" mass="47014">MREELIQGLLDFLNASPTPFHATTSLAMRLEAAGYRHLDERAPWHTEAGGRYYVTRNDSSIIAFKLGKRPVVEGGIRLVGAHTDSPCLRVKPSPELQRQGYFQLGVEVYGGALLAPWFDRDLSLAGRVTYRRDGKVESQLIDFYQPIAVIPNLAIHLNREANMGWAINAQNELPPILAQLASSETADFRALLAEQLAMEHDFNPDAVLDYELSFYDTQSAAIVGLNQDFIASARLDNLLSCYAGLQALIDSSDEETCVLVCTDHEEVGSCSACGADGPFLEQVLRRVLPEGDDFVRSIQRSLLVSADNAHGVHPNYADKHDGNHGPKLNAGPVIKINSNQRYATNSETAGFFRHLCLENEVPVQSFVVRSDMACGSTIGPITASQLGVRTVDIGLPTFAMHSIRELAGSHDVDHLVKVLTAFYSSPELP</sequence>
<gene>
    <name evidence="1" type="primary">apeB</name>
    <name type="ordered locus">Pmen_1231</name>
</gene>
<accession>A4XRN0</accession>
<dbReference type="EC" id="3.4.11.-" evidence="1"/>
<dbReference type="EMBL" id="CP000680">
    <property type="protein sequence ID" value="ABP83996.1"/>
    <property type="molecule type" value="Genomic_DNA"/>
</dbReference>
<dbReference type="SMR" id="A4XRN0"/>
<dbReference type="STRING" id="399739.Pmen_1231"/>
<dbReference type="KEGG" id="pmy:Pmen_1231"/>
<dbReference type="PATRIC" id="fig|399739.8.peg.1243"/>
<dbReference type="eggNOG" id="COG1362">
    <property type="taxonomic scope" value="Bacteria"/>
</dbReference>
<dbReference type="HOGENOM" id="CLU_019532_2_0_6"/>
<dbReference type="OrthoDB" id="5288740at2"/>
<dbReference type="GO" id="GO:0005737">
    <property type="term" value="C:cytoplasm"/>
    <property type="evidence" value="ECO:0007669"/>
    <property type="project" value="UniProtKB-ARBA"/>
</dbReference>
<dbReference type="GO" id="GO:0004177">
    <property type="term" value="F:aminopeptidase activity"/>
    <property type="evidence" value="ECO:0007669"/>
    <property type="project" value="UniProtKB-UniRule"/>
</dbReference>
<dbReference type="GO" id="GO:0008237">
    <property type="term" value="F:metallopeptidase activity"/>
    <property type="evidence" value="ECO:0007669"/>
    <property type="project" value="UniProtKB-UniRule"/>
</dbReference>
<dbReference type="GO" id="GO:0008270">
    <property type="term" value="F:zinc ion binding"/>
    <property type="evidence" value="ECO:0007669"/>
    <property type="project" value="UniProtKB-UniRule"/>
</dbReference>
<dbReference type="GO" id="GO:0006508">
    <property type="term" value="P:proteolysis"/>
    <property type="evidence" value="ECO:0007669"/>
    <property type="project" value="UniProtKB-UniRule"/>
</dbReference>
<dbReference type="CDD" id="cd05658">
    <property type="entry name" value="M18_DAP"/>
    <property type="match status" value="1"/>
</dbReference>
<dbReference type="FunFam" id="2.30.250.10:FF:000003">
    <property type="entry name" value="Probable M18 family aminopeptidase 2"/>
    <property type="match status" value="1"/>
</dbReference>
<dbReference type="Gene3D" id="2.30.250.10">
    <property type="entry name" value="Aminopeptidase i, Domain 2"/>
    <property type="match status" value="1"/>
</dbReference>
<dbReference type="Gene3D" id="3.40.630.10">
    <property type="entry name" value="Zn peptidases"/>
    <property type="match status" value="1"/>
</dbReference>
<dbReference type="HAMAP" id="MF_00467">
    <property type="entry name" value="Aminopeptidase_M18_2"/>
    <property type="match status" value="1"/>
</dbReference>
<dbReference type="InterPro" id="IPR022984">
    <property type="entry name" value="M18_aminopeptidase_2"/>
</dbReference>
<dbReference type="InterPro" id="IPR001948">
    <property type="entry name" value="Peptidase_M18"/>
</dbReference>
<dbReference type="InterPro" id="IPR023358">
    <property type="entry name" value="Peptidase_M18_dom2"/>
</dbReference>
<dbReference type="NCBIfam" id="NF002759">
    <property type="entry name" value="PRK02813.1"/>
    <property type="match status" value="1"/>
</dbReference>
<dbReference type="PANTHER" id="PTHR28570">
    <property type="entry name" value="ASPARTYL AMINOPEPTIDASE"/>
    <property type="match status" value="1"/>
</dbReference>
<dbReference type="PANTHER" id="PTHR28570:SF3">
    <property type="entry name" value="ASPARTYL AMINOPEPTIDASE"/>
    <property type="match status" value="1"/>
</dbReference>
<dbReference type="Pfam" id="PF02127">
    <property type="entry name" value="Peptidase_M18"/>
    <property type="match status" value="1"/>
</dbReference>
<dbReference type="PRINTS" id="PR00932">
    <property type="entry name" value="AMINO1PTASE"/>
</dbReference>
<dbReference type="SUPFAM" id="SSF101821">
    <property type="entry name" value="Aminopeptidase/glucanase lid domain"/>
    <property type="match status" value="1"/>
</dbReference>
<dbReference type="SUPFAM" id="SSF53187">
    <property type="entry name" value="Zn-dependent exopeptidases"/>
    <property type="match status" value="1"/>
</dbReference>
<organism>
    <name type="scientific">Ectopseudomonas mendocina (strain ymp)</name>
    <name type="common">Pseudomonas mendocina</name>
    <dbReference type="NCBI Taxonomy" id="399739"/>
    <lineage>
        <taxon>Bacteria</taxon>
        <taxon>Pseudomonadati</taxon>
        <taxon>Pseudomonadota</taxon>
        <taxon>Gammaproteobacteria</taxon>
        <taxon>Pseudomonadales</taxon>
        <taxon>Pseudomonadaceae</taxon>
        <taxon>Ectopseudomonas</taxon>
    </lineage>
</organism>
<feature type="chain" id="PRO_1000013704" description="Probable M18 family aminopeptidase 2">
    <location>
        <begin position="1"/>
        <end position="429"/>
    </location>
</feature>
<feature type="binding site" evidence="1">
    <location>
        <position position="82"/>
    </location>
    <ligand>
        <name>Zn(2+)</name>
        <dbReference type="ChEBI" id="CHEBI:29105"/>
    </ligand>
</feature>
<feature type="binding site" evidence="1">
    <location>
        <position position="156"/>
    </location>
    <ligand>
        <name>Zn(2+)</name>
        <dbReference type="ChEBI" id="CHEBI:29105"/>
    </ligand>
</feature>
<feature type="binding site" evidence="1">
    <location>
        <position position="401"/>
    </location>
    <ligand>
        <name>Zn(2+)</name>
        <dbReference type="ChEBI" id="CHEBI:29105"/>
    </ligand>
</feature>
<keyword id="KW-0031">Aminopeptidase</keyword>
<keyword id="KW-0378">Hydrolase</keyword>
<keyword id="KW-0479">Metal-binding</keyword>
<keyword id="KW-0482">Metalloprotease</keyword>
<keyword id="KW-0645">Protease</keyword>
<keyword id="KW-0862">Zinc</keyword>
<comment type="cofactor">
    <cofactor evidence="1">
        <name>Zn(2+)</name>
        <dbReference type="ChEBI" id="CHEBI:29105"/>
    </cofactor>
</comment>
<comment type="similarity">
    <text evidence="1">Belongs to the peptidase M18 family.</text>
</comment>
<reference key="1">
    <citation type="submission" date="2007-04" db="EMBL/GenBank/DDBJ databases">
        <title>Complete sequence of Pseudomonas mendocina ymp.</title>
        <authorList>
            <consortium name="US DOE Joint Genome Institute"/>
            <person name="Copeland A."/>
            <person name="Lucas S."/>
            <person name="Lapidus A."/>
            <person name="Barry K."/>
            <person name="Glavina del Rio T."/>
            <person name="Dalin E."/>
            <person name="Tice H."/>
            <person name="Pitluck S."/>
            <person name="Kiss H."/>
            <person name="Brettin T."/>
            <person name="Detter J.C."/>
            <person name="Bruce D."/>
            <person name="Han C."/>
            <person name="Schmutz J."/>
            <person name="Larimer F."/>
            <person name="Land M."/>
            <person name="Hauser L."/>
            <person name="Kyrpides N."/>
            <person name="Mikhailova N."/>
            <person name="Hersman L."/>
            <person name="Dubois J."/>
            <person name="Maurice P."/>
            <person name="Richardson P."/>
        </authorList>
    </citation>
    <scope>NUCLEOTIDE SEQUENCE [LARGE SCALE GENOMIC DNA]</scope>
    <source>
        <strain>ymp</strain>
    </source>
</reference>
<name>APEB_ECTM1</name>
<evidence type="ECO:0000255" key="1">
    <source>
        <dbReference type="HAMAP-Rule" id="MF_00467"/>
    </source>
</evidence>
<protein>
    <recommendedName>
        <fullName evidence="1">Probable M18 family aminopeptidase 2</fullName>
        <ecNumber evidence="1">3.4.11.-</ecNumber>
    </recommendedName>
</protein>
<proteinExistence type="inferred from homology"/>